<keyword id="KW-0238">DNA-binding</keyword>
<keyword id="KW-0489">Methyltransferase</keyword>
<keyword id="KW-0614">Plasmid</keyword>
<keyword id="KW-0680">Restriction system</keyword>
<keyword id="KW-0949">S-adenosyl-L-methionine</keyword>
<keyword id="KW-0808">Transferase</keyword>
<geneLocation type="plasmid">
    <name>pXH13</name>
</geneLocation>
<evidence type="ECO:0000255" key="1">
    <source>
        <dbReference type="PROSITE-ProRule" id="PRU01016"/>
    </source>
</evidence>
<evidence type="ECO:0000255" key="2">
    <source>
        <dbReference type="PROSITE-ProRule" id="PRU10018"/>
    </source>
</evidence>
<evidence type="ECO:0000303" key="3">
    <source>
    </source>
</evidence>
<evidence type="ECO:0000303" key="4">
    <source>
    </source>
</evidence>
<evidence type="ECO:0000305" key="5">
    <source>
    </source>
</evidence>
<name>MTB6_BACSF</name>
<comment type="function">
    <text evidence="3 5">A methylase that recognizes the double-stranded sequence 5'-GCNGC-3', methylates C-? on both strands, and protects the DNA from cleavage by the Bsp6I endonuclease.</text>
</comment>
<comment type="catalytic activity">
    <reaction evidence="2">
        <text>a 2'-deoxycytidine in DNA + S-adenosyl-L-methionine = a 5-methyl-2'-deoxycytidine in DNA + S-adenosyl-L-homocysteine + H(+)</text>
        <dbReference type="Rhea" id="RHEA:13681"/>
        <dbReference type="Rhea" id="RHEA-COMP:11369"/>
        <dbReference type="Rhea" id="RHEA-COMP:11370"/>
        <dbReference type="ChEBI" id="CHEBI:15378"/>
        <dbReference type="ChEBI" id="CHEBI:57856"/>
        <dbReference type="ChEBI" id="CHEBI:59789"/>
        <dbReference type="ChEBI" id="CHEBI:85452"/>
        <dbReference type="ChEBI" id="CHEBI:85454"/>
        <dbReference type="EC" id="2.1.1.37"/>
    </reaction>
</comment>
<comment type="similarity">
    <text evidence="1">Belongs to the class I-like SAM-binding methyltransferase superfamily. C5-methyltransferase family.</text>
</comment>
<protein>
    <recommendedName>
        <fullName evidence="3">Type II methyltransferase M.Bsp6I</fullName>
        <shortName evidence="4">M.Bsp6I</shortName>
        <ecNumber>2.1.1.37</ecNumber>
    </recommendedName>
    <alternativeName>
        <fullName>Cytosine-specific methyltransferase Bsp6I</fullName>
    </alternativeName>
    <alternativeName>
        <fullName>Modification methylase Bsp6I</fullName>
    </alternativeName>
</protein>
<proteinExistence type="inferred from homology"/>
<dbReference type="EC" id="2.1.1.37"/>
<dbReference type="EMBL" id="X81638">
    <property type="protein sequence ID" value="CAA57293.1"/>
    <property type="molecule type" value="Genomic_DNA"/>
</dbReference>
<dbReference type="PIR" id="I40138">
    <property type="entry name" value="I40138"/>
</dbReference>
<dbReference type="SMR" id="P43420"/>
<dbReference type="REBASE" id="205334">
    <property type="entry name" value="M.Bso1395ORF1169P"/>
</dbReference>
<dbReference type="REBASE" id="3315">
    <property type="entry name" value="M.Bsp6I"/>
</dbReference>
<dbReference type="PRO" id="PR:P43420"/>
<dbReference type="GO" id="GO:0003886">
    <property type="term" value="F:DNA (cytosine-5-)-methyltransferase activity"/>
    <property type="evidence" value="ECO:0007669"/>
    <property type="project" value="UniProtKB-EC"/>
</dbReference>
<dbReference type="GO" id="GO:0003677">
    <property type="term" value="F:DNA binding"/>
    <property type="evidence" value="ECO:0007669"/>
    <property type="project" value="UniProtKB-KW"/>
</dbReference>
<dbReference type="GO" id="GO:0009307">
    <property type="term" value="P:DNA restriction-modification system"/>
    <property type="evidence" value="ECO:0007669"/>
    <property type="project" value="UniProtKB-KW"/>
</dbReference>
<dbReference type="GO" id="GO:0032259">
    <property type="term" value="P:methylation"/>
    <property type="evidence" value="ECO:0007669"/>
    <property type="project" value="UniProtKB-KW"/>
</dbReference>
<dbReference type="CDD" id="cd00315">
    <property type="entry name" value="Cyt_C5_DNA_methylase"/>
    <property type="match status" value="1"/>
</dbReference>
<dbReference type="Gene3D" id="3.90.120.10">
    <property type="entry name" value="DNA Methylase, subunit A, domain 2"/>
    <property type="match status" value="1"/>
</dbReference>
<dbReference type="Gene3D" id="3.40.50.150">
    <property type="entry name" value="Vaccinia Virus protein VP39"/>
    <property type="match status" value="1"/>
</dbReference>
<dbReference type="InterPro" id="IPR050750">
    <property type="entry name" value="C5-MTase"/>
</dbReference>
<dbReference type="InterPro" id="IPR018117">
    <property type="entry name" value="C5_DNA_meth_AS"/>
</dbReference>
<dbReference type="InterPro" id="IPR001525">
    <property type="entry name" value="C5_MeTfrase"/>
</dbReference>
<dbReference type="InterPro" id="IPR031303">
    <property type="entry name" value="C5_meth_CS"/>
</dbReference>
<dbReference type="InterPro" id="IPR029063">
    <property type="entry name" value="SAM-dependent_MTases_sf"/>
</dbReference>
<dbReference type="NCBIfam" id="TIGR00675">
    <property type="entry name" value="dcm"/>
    <property type="match status" value="1"/>
</dbReference>
<dbReference type="PANTHER" id="PTHR46098">
    <property type="entry name" value="TRNA (CYTOSINE(38)-C(5))-METHYLTRANSFERASE"/>
    <property type="match status" value="1"/>
</dbReference>
<dbReference type="PANTHER" id="PTHR46098:SF1">
    <property type="entry name" value="TRNA (CYTOSINE(38)-C(5))-METHYLTRANSFERASE"/>
    <property type="match status" value="1"/>
</dbReference>
<dbReference type="Pfam" id="PF00145">
    <property type="entry name" value="DNA_methylase"/>
    <property type="match status" value="1"/>
</dbReference>
<dbReference type="PRINTS" id="PR00105">
    <property type="entry name" value="C5METTRFRASE"/>
</dbReference>
<dbReference type="SUPFAM" id="SSF53335">
    <property type="entry name" value="S-adenosyl-L-methionine-dependent methyltransferases"/>
    <property type="match status" value="1"/>
</dbReference>
<dbReference type="PROSITE" id="PS00094">
    <property type="entry name" value="C5_MTASE_1"/>
    <property type="match status" value="1"/>
</dbReference>
<dbReference type="PROSITE" id="PS00095">
    <property type="entry name" value="C5_MTASE_2"/>
    <property type="match status" value="1"/>
</dbReference>
<dbReference type="PROSITE" id="PS51679">
    <property type="entry name" value="SAM_MT_C5"/>
    <property type="match status" value="1"/>
</dbReference>
<accession>P43420</accession>
<reference key="1">
    <citation type="journal article" date="1995" name="Gene">
        <title>Cloning and analysis of the plasmid-borne genes encoding the Bsp6I restriction and modification enzymes.</title>
        <authorList>
            <person name="Lubys A."/>
            <person name="Janulaitis A."/>
        </authorList>
    </citation>
    <scope>NUCLEOTIDE SEQUENCE [GENOMIC DNA]</scope>
    <scope>FUNCTION</scope>
    <source>
        <strain>RFL6</strain>
    </source>
</reference>
<reference key="2">
    <citation type="journal article" date="2003" name="Nucleic Acids Res.">
        <title>A nomenclature for restriction enzymes, DNA methyltransferases, homing endonucleases and their genes.</title>
        <authorList>
            <person name="Roberts R.J."/>
            <person name="Belfort M."/>
            <person name="Bestor T."/>
            <person name="Bhagwat A.S."/>
            <person name="Bickle T.A."/>
            <person name="Bitinaite J."/>
            <person name="Blumenthal R.M."/>
            <person name="Degtyarev S.K."/>
            <person name="Dryden D.T."/>
            <person name="Dybvig K."/>
            <person name="Firman K."/>
            <person name="Gromova E.S."/>
            <person name="Gumport R.I."/>
            <person name="Halford S.E."/>
            <person name="Hattman S."/>
            <person name="Heitman J."/>
            <person name="Hornby D.P."/>
            <person name="Janulaitis A."/>
            <person name="Jeltsch A."/>
            <person name="Josephsen J."/>
            <person name="Kiss A."/>
            <person name="Klaenhammer T.R."/>
            <person name="Kobayashi I."/>
            <person name="Kong H."/>
            <person name="Krueger D.H."/>
            <person name="Lacks S."/>
            <person name="Marinus M.G."/>
            <person name="Miyahara M."/>
            <person name="Morgan R.D."/>
            <person name="Murray N.E."/>
            <person name="Nagaraja V."/>
            <person name="Piekarowicz A."/>
            <person name="Pingoud A."/>
            <person name="Raleigh E."/>
            <person name="Rao D.N."/>
            <person name="Reich N."/>
            <person name="Repin V.E."/>
            <person name="Selker E.U."/>
            <person name="Shaw P.C."/>
            <person name="Stein D.C."/>
            <person name="Stoddard B.L."/>
            <person name="Szybalski W."/>
            <person name="Trautner T.A."/>
            <person name="Van Etten J.L."/>
            <person name="Vitor J.M."/>
            <person name="Wilson G.G."/>
            <person name="Xu S.Y."/>
        </authorList>
    </citation>
    <scope>NOMENCLATURE</scope>
</reference>
<sequence length="315" mass="36315">MLQIASLFAGVGGIDLGFEQTGYFETVWANEYDKNAAITYQSNFKNKLIIDDIRNIKVEDVPDFDVLLSGFPCTSFSVAGYRKGFEDEKSGDLFFETLRLIVAKKPQVIFLENVKNLVGHDNGNTFKVIYEALESNGYHIKYQVLNAKDFGNIPQNRERIYIVGFRNIEHYKNFNFPMPQPLTLTIKDMINLSDKLDDRFYYTEDKCSFYSPLQEQMTSDETIYQWRRKYVRENKSNVCPTLTANMGTGGHNVPLVKTKHGIRKLTPRECFNFQGYPEDFILPELAPTHLYKQAGNSVVVPVIRRIAENIYKSML</sequence>
<organism>
    <name type="scientific">Bacillus sp. (strain RFL6)</name>
    <dbReference type="NCBI Taxonomy" id="72577"/>
    <lineage>
        <taxon>Bacteria</taxon>
        <taxon>Bacillati</taxon>
        <taxon>Bacillota</taxon>
        <taxon>Bacilli</taxon>
        <taxon>Bacillales</taxon>
        <taxon>Bacillaceae</taxon>
        <taxon>Bacillus</taxon>
    </lineage>
</organism>
<gene>
    <name evidence="4" type="primary">bsp6IM</name>
</gene>
<feature type="chain" id="PRO_0000087859" description="Type II methyltransferase M.Bsp6I">
    <location>
        <begin position="1"/>
        <end position="315"/>
    </location>
</feature>
<feature type="domain" description="SAM-dependent MTase C5-type" evidence="1">
    <location>
        <begin position="2"/>
        <end position="315"/>
    </location>
</feature>
<feature type="active site" evidence="1 2">
    <location>
        <position position="73"/>
    </location>
</feature>